<keyword id="KW-0413">Isomerase</keyword>
<keyword id="KW-1185">Reference proteome</keyword>
<keyword id="KW-0819">tRNA processing</keyword>
<feature type="chain" id="PRO_1000017073" description="tRNA pseudouridine synthase A">
    <location>
        <begin position="1"/>
        <end position="278"/>
    </location>
</feature>
<feature type="active site" description="Nucleophile" evidence="1">
    <location>
        <position position="61"/>
    </location>
</feature>
<feature type="binding site" evidence="1">
    <location>
        <position position="119"/>
    </location>
    <ligand>
        <name>substrate</name>
    </ligand>
</feature>
<evidence type="ECO:0000255" key="1">
    <source>
        <dbReference type="HAMAP-Rule" id="MF_00171"/>
    </source>
</evidence>
<dbReference type="EC" id="5.4.99.12" evidence="1"/>
<dbReference type="EMBL" id="CP000112">
    <property type="protein sequence ID" value="ABB39503.1"/>
    <property type="molecule type" value="Genomic_DNA"/>
</dbReference>
<dbReference type="RefSeq" id="WP_011368530.1">
    <property type="nucleotide sequence ID" value="NC_007519.1"/>
</dbReference>
<dbReference type="SMR" id="Q30XU3"/>
<dbReference type="STRING" id="207559.Dde_2707"/>
<dbReference type="KEGG" id="dde:Dde_2707"/>
<dbReference type="eggNOG" id="COG0101">
    <property type="taxonomic scope" value="Bacteria"/>
</dbReference>
<dbReference type="HOGENOM" id="CLU_014673_0_1_7"/>
<dbReference type="Proteomes" id="UP000002710">
    <property type="component" value="Chromosome"/>
</dbReference>
<dbReference type="GO" id="GO:0003723">
    <property type="term" value="F:RNA binding"/>
    <property type="evidence" value="ECO:0007669"/>
    <property type="project" value="InterPro"/>
</dbReference>
<dbReference type="GO" id="GO:0160147">
    <property type="term" value="F:tRNA pseudouridine(38-40) synthase activity"/>
    <property type="evidence" value="ECO:0007669"/>
    <property type="project" value="UniProtKB-EC"/>
</dbReference>
<dbReference type="GO" id="GO:0031119">
    <property type="term" value="P:tRNA pseudouridine synthesis"/>
    <property type="evidence" value="ECO:0007669"/>
    <property type="project" value="UniProtKB-UniRule"/>
</dbReference>
<dbReference type="CDD" id="cd02570">
    <property type="entry name" value="PseudoU_synth_EcTruA"/>
    <property type="match status" value="1"/>
</dbReference>
<dbReference type="FunFam" id="3.30.70.580:FF:000001">
    <property type="entry name" value="tRNA pseudouridine synthase A"/>
    <property type="match status" value="1"/>
</dbReference>
<dbReference type="Gene3D" id="3.30.70.660">
    <property type="entry name" value="Pseudouridine synthase I, catalytic domain, C-terminal subdomain"/>
    <property type="match status" value="1"/>
</dbReference>
<dbReference type="Gene3D" id="3.30.70.580">
    <property type="entry name" value="Pseudouridine synthase I, catalytic domain, N-terminal subdomain"/>
    <property type="match status" value="1"/>
</dbReference>
<dbReference type="HAMAP" id="MF_00171">
    <property type="entry name" value="TruA"/>
    <property type="match status" value="1"/>
</dbReference>
<dbReference type="InterPro" id="IPR020103">
    <property type="entry name" value="PsdUridine_synth_cat_dom_sf"/>
</dbReference>
<dbReference type="InterPro" id="IPR001406">
    <property type="entry name" value="PsdUridine_synth_TruA"/>
</dbReference>
<dbReference type="InterPro" id="IPR020097">
    <property type="entry name" value="PsdUridine_synth_TruA_a/b_dom"/>
</dbReference>
<dbReference type="InterPro" id="IPR020095">
    <property type="entry name" value="PsdUridine_synth_TruA_C"/>
</dbReference>
<dbReference type="InterPro" id="IPR020094">
    <property type="entry name" value="TruA/RsuA/RluB/E/F_N"/>
</dbReference>
<dbReference type="NCBIfam" id="TIGR00071">
    <property type="entry name" value="hisT_truA"/>
    <property type="match status" value="1"/>
</dbReference>
<dbReference type="PANTHER" id="PTHR11142">
    <property type="entry name" value="PSEUDOURIDYLATE SYNTHASE"/>
    <property type="match status" value="1"/>
</dbReference>
<dbReference type="PANTHER" id="PTHR11142:SF0">
    <property type="entry name" value="TRNA PSEUDOURIDINE SYNTHASE-LIKE 1"/>
    <property type="match status" value="1"/>
</dbReference>
<dbReference type="Pfam" id="PF01416">
    <property type="entry name" value="PseudoU_synth_1"/>
    <property type="match status" value="2"/>
</dbReference>
<dbReference type="PIRSF" id="PIRSF001430">
    <property type="entry name" value="tRNA_psdUrid_synth"/>
    <property type="match status" value="1"/>
</dbReference>
<dbReference type="SUPFAM" id="SSF55120">
    <property type="entry name" value="Pseudouridine synthase"/>
    <property type="match status" value="1"/>
</dbReference>
<sequence length="278" mass="30368">MARLKLIIAYAGTRYAGWQIQCLPAGRPHAVQQPTVQQAVEDAAKAILGSAVRVHGAGRTDSGVHAEGQVAHLDIPDAKAAVDWRRALNAKLPEDISVLQAAVVPDGFHARFDAVKKRYTYRIWLTRAFVLPQRRPFVHMTGPLDIAAMDAAAAFMTGTHDFASFQNAGTELATTVRTVYSITRTPGLAPDDFPRSHDTTPRAPLELAWHFEADGFLKQMVRNMMGLLLWTGTGRCAPEDVPAIIAARDRRLSAPTAPACGLTMERVFYPDECCPPES</sequence>
<accession>Q30XU3</accession>
<gene>
    <name evidence="1" type="primary">truA</name>
    <name type="ordered locus">Dde_2707</name>
</gene>
<proteinExistence type="inferred from homology"/>
<organism>
    <name type="scientific">Oleidesulfovibrio alaskensis (strain ATCC BAA-1058 / DSM 17464 / G20)</name>
    <name type="common">Desulfovibrio alaskensis</name>
    <dbReference type="NCBI Taxonomy" id="207559"/>
    <lineage>
        <taxon>Bacteria</taxon>
        <taxon>Pseudomonadati</taxon>
        <taxon>Thermodesulfobacteriota</taxon>
        <taxon>Desulfovibrionia</taxon>
        <taxon>Desulfovibrionales</taxon>
        <taxon>Desulfovibrionaceae</taxon>
        <taxon>Oleidesulfovibrio</taxon>
    </lineage>
</organism>
<comment type="function">
    <text evidence="1">Formation of pseudouridine at positions 38, 39 and 40 in the anticodon stem and loop of transfer RNAs.</text>
</comment>
<comment type="catalytic activity">
    <reaction evidence="1">
        <text>uridine(38/39/40) in tRNA = pseudouridine(38/39/40) in tRNA</text>
        <dbReference type="Rhea" id="RHEA:22376"/>
        <dbReference type="Rhea" id="RHEA-COMP:10085"/>
        <dbReference type="Rhea" id="RHEA-COMP:10087"/>
        <dbReference type="ChEBI" id="CHEBI:65314"/>
        <dbReference type="ChEBI" id="CHEBI:65315"/>
        <dbReference type="EC" id="5.4.99.12"/>
    </reaction>
</comment>
<comment type="subunit">
    <text evidence="1">Homodimer.</text>
</comment>
<comment type="similarity">
    <text evidence="1">Belongs to the tRNA pseudouridine synthase TruA family.</text>
</comment>
<name>TRUA_OLEA2</name>
<reference key="1">
    <citation type="journal article" date="2011" name="J. Bacteriol.">
        <title>Complete genome sequence and updated annotation of Desulfovibrio alaskensis G20.</title>
        <authorList>
            <person name="Hauser L.J."/>
            <person name="Land M.L."/>
            <person name="Brown S.D."/>
            <person name="Larimer F."/>
            <person name="Keller K.L."/>
            <person name="Rapp-Giles B.J."/>
            <person name="Price M.N."/>
            <person name="Lin M."/>
            <person name="Bruce D.C."/>
            <person name="Detter J.C."/>
            <person name="Tapia R."/>
            <person name="Han C.S."/>
            <person name="Goodwin L.A."/>
            <person name="Cheng J.F."/>
            <person name="Pitluck S."/>
            <person name="Copeland A."/>
            <person name="Lucas S."/>
            <person name="Nolan M."/>
            <person name="Lapidus A.L."/>
            <person name="Palumbo A.V."/>
            <person name="Wall J.D."/>
        </authorList>
    </citation>
    <scope>NUCLEOTIDE SEQUENCE [LARGE SCALE GENOMIC DNA]</scope>
    <source>
        <strain>ATCC BAA-1058 / DSM 17464 / G20</strain>
    </source>
</reference>
<protein>
    <recommendedName>
        <fullName evidence="1">tRNA pseudouridine synthase A</fullName>
        <ecNumber evidence="1">5.4.99.12</ecNumber>
    </recommendedName>
    <alternativeName>
        <fullName evidence="1">tRNA pseudouridine(38-40) synthase</fullName>
    </alternativeName>
    <alternativeName>
        <fullName evidence="1">tRNA pseudouridylate synthase I</fullName>
    </alternativeName>
    <alternativeName>
        <fullName evidence="1">tRNA-uridine isomerase I</fullName>
    </alternativeName>
</protein>